<comment type="function">
    <text evidence="1">Can constrain negative DNA supercoils. May be involved in maintaining the integrity of the genome at high temperature.</text>
</comment>
<comment type="biophysicochemical properties">
    <phDependence>
        <text evidence="2">Highly stable from pH 0 to pH 12.</text>
    </phDependence>
    <temperatureDependence>
        <text evidence="2">Hyperthermostable.</text>
    </temperatureDependence>
</comment>
<comment type="subunit">
    <text evidence="2">Monomer.</text>
</comment>
<comment type="subcellular location">
    <subcellularLocation>
        <location evidence="2">Cytoplasm</location>
    </subcellularLocation>
</comment>
<comment type="PTM">
    <text evidence="3">Lys-63 was found to be 25% monomethylated and Lys-64 was found to be 36% monomethylated.</text>
</comment>
<comment type="miscellaneous">
    <text evidence="3">7e possesses the tighter binding as compared to that of the proteins 7a and 7b, which may be due to the three supplementary lysines in the C-terminal region.</text>
</comment>
<comment type="similarity">
    <text evidence="4">Belongs to the 7 kDa DNA-binding/endoribonuclease P2 family.</text>
</comment>
<name>DN7E_SULAC</name>
<protein>
    <recommendedName>
        <fullName evidence="4">DNA-binding protein 7e</fullName>
    </recommendedName>
    <alternativeName>
        <fullName>7 kDa DNA-binding protein e</fullName>
    </alternativeName>
    <alternativeName>
        <fullName>Sac7e</fullName>
    </alternativeName>
</protein>
<gene>
    <name type="ordered locus">Saci_0362</name>
</gene>
<dbReference type="EMBL" id="L08891">
    <property type="protein sequence ID" value="AAA80316.1"/>
    <property type="molecule type" value="Genomic_DNA"/>
</dbReference>
<dbReference type="EMBL" id="CP000077">
    <property type="protein sequence ID" value="AAY79778.1"/>
    <property type="molecule type" value="Genomic_DNA"/>
</dbReference>
<dbReference type="PIR" id="C27749">
    <property type="entry name" value="C27749"/>
</dbReference>
<dbReference type="RefSeq" id="WP_011277280.1">
    <property type="nucleotide sequence ID" value="NC_007181.1"/>
</dbReference>
<dbReference type="SMR" id="P13125"/>
<dbReference type="STRING" id="330779.Saci_0362"/>
<dbReference type="iPTMnet" id="P13125"/>
<dbReference type="GeneID" id="14550891"/>
<dbReference type="KEGG" id="sai:Saci_0362"/>
<dbReference type="PATRIC" id="fig|330779.12.peg.359"/>
<dbReference type="eggNOG" id="arCOG05888">
    <property type="taxonomic scope" value="Archaea"/>
</dbReference>
<dbReference type="HOGENOM" id="CLU_2929990_0_0_2"/>
<dbReference type="Proteomes" id="UP000001018">
    <property type="component" value="Chromosome"/>
</dbReference>
<dbReference type="GO" id="GO:0005737">
    <property type="term" value="C:cytoplasm"/>
    <property type="evidence" value="ECO:0007669"/>
    <property type="project" value="UniProtKB-SubCell"/>
</dbReference>
<dbReference type="GO" id="GO:0003677">
    <property type="term" value="F:DNA binding"/>
    <property type="evidence" value="ECO:0007669"/>
    <property type="project" value="UniProtKB-KW"/>
</dbReference>
<dbReference type="GO" id="GO:0004521">
    <property type="term" value="F:RNA endonuclease activity"/>
    <property type="evidence" value="ECO:0007669"/>
    <property type="project" value="InterPro"/>
</dbReference>
<dbReference type="Gene3D" id="2.40.50.40">
    <property type="match status" value="1"/>
</dbReference>
<dbReference type="InterPro" id="IPR016197">
    <property type="entry name" value="Chromo-like_dom_sf"/>
</dbReference>
<dbReference type="InterPro" id="IPR003212">
    <property type="entry name" value="DNA-bd_7a-e_arc"/>
</dbReference>
<dbReference type="NCBIfam" id="NF045555">
    <property type="entry name" value="Sul7d"/>
    <property type="match status" value="1"/>
</dbReference>
<dbReference type="Pfam" id="PF02294">
    <property type="entry name" value="7kD_DNA_binding"/>
    <property type="match status" value="1"/>
</dbReference>
<dbReference type="PIRSF" id="PIRSF036912">
    <property type="entry name" value="Sac7"/>
    <property type="match status" value="1"/>
</dbReference>
<dbReference type="SUPFAM" id="SSF54160">
    <property type="entry name" value="Chromo domain-like"/>
    <property type="match status" value="1"/>
</dbReference>
<organism>
    <name type="scientific">Sulfolobus acidocaldarius (strain ATCC 33909 / DSM 639 / JCM 8929 / NBRC 15157 / NCIMB 11770)</name>
    <dbReference type="NCBI Taxonomy" id="330779"/>
    <lineage>
        <taxon>Archaea</taxon>
        <taxon>Thermoproteota</taxon>
        <taxon>Thermoprotei</taxon>
        <taxon>Sulfolobales</taxon>
        <taxon>Sulfolobaceae</taxon>
        <taxon>Sulfolobus</taxon>
    </lineage>
</organism>
<evidence type="ECO:0000250" key="1">
    <source>
        <dbReference type="UniProtKB" id="P61990"/>
    </source>
</evidence>
<evidence type="ECO:0000269" key="2">
    <source>
    </source>
</evidence>
<evidence type="ECO:0000269" key="3">
    <source>
    </source>
</evidence>
<evidence type="ECO:0000305" key="4"/>
<sequence length="65" mass="7470">MAKVRFKYKGEEKEVDTSKIKKVWRVGKMVSFTYDDNGKTGRGAVSEKDAPKELMDMLARAEKKK</sequence>
<feature type="initiator methionine" description="Removed" evidence="3">
    <location>
        <position position="1"/>
    </location>
</feature>
<feature type="chain" id="PRO_0000213075" description="DNA-binding protein 7e">
    <location>
        <begin position="2"/>
        <end position="65"/>
    </location>
</feature>
<feature type="modified residue" description="N6-methyllysine" evidence="3">
    <location>
        <position position="7"/>
    </location>
</feature>
<feature type="modified residue" description="N6-methyllysine; partial" evidence="3">
    <location>
        <position position="63"/>
    </location>
</feature>
<feature type="modified residue" description="N6-methyllysine; partial" evidence="3">
    <location>
        <position position="64"/>
    </location>
</feature>
<reference key="1">
    <citation type="journal article" date="1995" name="Biochemistry">
        <title>Gene cloning, expression, and characterization of the Sac7 proteins from the hyperthermophile Sulfolobus acidocaldarius.</title>
        <authorList>
            <person name="McAfee J.G."/>
            <person name="Edmondson S.P."/>
            <person name="Datta P.K."/>
            <person name="Shriver J.W."/>
            <person name="Gupta R."/>
        </authorList>
    </citation>
    <scope>NUCLEOTIDE SEQUENCE [GENOMIC DNA]</scope>
    <scope>DNA-BINDING</scope>
</reference>
<reference key="2">
    <citation type="journal article" date="2005" name="J. Bacteriol.">
        <title>The genome of Sulfolobus acidocaldarius, a model organism of the Crenarchaeota.</title>
        <authorList>
            <person name="Chen L."/>
            <person name="Bruegger K."/>
            <person name="Skovgaard M."/>
            <person name="Redder P."/>
            <person name="She Q."/>
            <person name="Torarinsson E."/>
            <person name="Greve B."/>
            <person name="Awayez M."/>
            <person name="Zibat A."/>
            <person name="Klenk H.-P."/>
            <person name="Garrett R.A."/>
        </authorList>
    </citation>
    <scope>NUCLEOTIDE SEQUENCE [LARGE SCALE GENOMIC DNA]</scope>
    <source>
        <strain>ATCC 33909 / DSM 639 / JCM 8929 / NBRC 15157 / NCIMB 11770</strain>
    </source>
</reference>
<reference key="3">
    <citation type="journal article" date="1988" name="J. Biol. Chem.">
        <title>Microsequence analysis of DNA-binding proteins 7a, 7b, and 7e from the archaebacterium Sulfolobus acidocaldarius.</title>
        <authorList>
            <person name="Choli T."/>
            <person name="Wittmann-Liebold B."/>
            <person name="Reinhardt R."/>
        </authorList>
    </citation>
    <scope>PROTEIN SEQUENCE OF 2-65</scope>
    <scope>METHYLATION AT LYS-7; LYS-63 AND LYS-64</scope>
</reference>
<reference key="4">
    <citation type="journal article" date="2016" name="Sci. Rep.">
        <title>The archaeal '7 kDa DNA-binding' proteins: extended characterization of an old gifted family.</title>
        <authorList>
            <person name="Kalichuk V."/>
            <person name="Behar G."/>
            <person name="Renodon-Corniere A."/>
            <person name="Danovski G."/>
            <person name="Obal G."/>
            <person name="Barbet J."/>
            <person name="Mouratou B."/>
            <person name="Pecorari F."/>
        </authorList>
    </citation>
    <scope>DNA-BINDING</scope>
    <scope>BIOPHYSICOCHEMICAL PROPERTIES</scope>
    <scope>SUBUNIT</scope>
    <scope>SUBCELLULAR LOCATION</scope>
</reference>
<accession>P13125</accession>
<accession>Q4JBQ1</accession>
<keyword id="KW-0963">Cytoplasm</keyword>
<keyword id="KW-0903">Direct protein sequencing</keyword>
<keyword id="KW-0238">DNA-binding</keyword>
<keyword id="KW-0488">Methylation</keyword>
<keyword id="KW-1185">Reference proteome</keyword>
<proteinExistence type="evidence at protein level"/>